<dbReference type="EMBL" id="U16726">
    <property type="protein sequence ID" value="AAA98454.1"/>
    <property type="molecule type" value="Genomic_DNA"/>
</dbReference>
<dbReference type="PIR" id="S59591">
    <property type="entry name" value="S59591"/>
</dbReference>
<dbReference type="RefSeq" id="XP_001691162.1">
    <property type="nucleotide sequence ID" value="XM_001691110.2"/>
</dbReference>
<dbReference type="RefSeq" id="XP_001696173.1">
    <property type="nucleotide sequence ID" value="XM_001696121.1"/>
</dbReference>
<dbReference type="RefSeq" id="XP_001696186.1">
    <property type="nucleotide sequence ID" value="XM_001696134.2"/>
</dbReference>
<dbReference type="RefSeq" id="XP_001696192.1">
    <property type="nucleotide sequence ID" value="XM_001696140.2"/>
</dbReference>
<dbReference type="RefSeq" id="XP_001696523.1">
    <property type="nucleotide sequence ID" value="XM_001696471.2"/>
</dbReference>
<dbReference type="RefSeq" id="XP_001696538.1">
    <property type="nucleotide sequence ID" value="XM_001696486.1"/>
</dbReference>
<dbReference type="RefSeq" id="XP_001696549.1">
    <property type="nucleotide sequence ID" value="XM_001696497.2"/>
</dbReference>
<dbReference type="RefSeq" id="XP_001701414.1">
    <property type="nucleotide sequence ID" value="XM_001701362.2"/>
</dbReference>
<dbReference type="RefSeq" id="XP_001703061.2">
    <property type="nucleotide sequence ID" value="XM_001703009.3"/>
</dbReference>
<dbReference type="SMR" id="P54347"/>
<dbReference type="PaxDb" id="3055-EDO95750"/>
<dbReference type="EnsemblPlants" id="PNW81901">
    <property type="protein sequence ID" value="PNW81901"/>
    <property type="gene ID" value="CHLRE_06g265400v5"/>
</dbReference>
<dbReference type="EnsemblPlants" id="PNW81931">
    <property type="protein sequence ID" value="PNW81931"/>
    <property type="gene ID" value="CHLRE_06g266750v5"/>
</dbReference>
<dbReference type="EnsemblPlants" id="PNW81961">
    <property type="protein sequence ID" value="PNW81961"/>
    <property type="gene ID" value="CHLRE_06g268100v5"/>
</dbReference>
<dbReference type="EnsemblPlants" id="PNW82100">
    <property type="protein sequence ID" value="PNW82100"/>
    <property type="gene ID" value="CHLRE_06g273850v5"/>
</dbReference>
<dbReference type="EnsemblPlants" id="PNW82108">
    <property type="protein sequence ID" value="PNW82108"/>
    <property type="gene ID" value="CHLRE_06g274250v5"/>
</dbReference>
<dbReference type="EnsemblPlants" id="PNW82118">
    <property type="protein sequence ID" value="PNW82118"/>
    <property type="gene ID" value="CHLRE_06g274750v5"/>
</dbReference>
<dbReference type="EnsemblPlants" id="PNW82140">
    <property type="protein sequence ID" value="PNW82140"/>
    <property type="gene ID" value="CHLRE_06g275800v5"/>
</dbReference>
<dbReference type="GeneID" id="5716755"/>
<dbReference type="GeneID" id="5721769"/>
<dbReference type="GeneID" id="5721783"/>
<dbReference type="GeneID" id="5721899"/>
<dbReference type="GeneID" id="5721955"/>
<dbReference type="GeneID" id="5726927"/>
<dbReference type="GeneID" id="5728602"/>
<dbReference type="Gramene" id="PNW81901">
    <property type="protein sequence ID" value="PNW81901"/>
    <property type="gene ID" value="CHLRE_06g265400v5"/>
</dbReference>
<dbReference type="Gramene" id="PNW81931">
    <property type="protein sequence ID" value="PNW81931"/>
    <property type="gene ID" value="CHLRE_06g266750v5"/>
</dbReference>
<dbReference type="Gramene" id="PNW81961">
    <property type="protein sequence ID" value="PNW81961"/>
    <property type="gene ID" value="CHLRE_06g268100v5"/>
</dbReference>
<dbReference type="Gramene" id="PNW82100">
    <property type="protein sequence ID" value="PNW82100"/>
    <property type="gene ID" value="CHLRE_06g273850v5"/>
</dbReference>
<dbReference type="Gramene" id="PNW82108">
    <property type="protein sequence ID" value="PNW82108"/>
    <property type="gene ID" value="CHLRE_06g274250v5"/>
</dbReference>
<dbReference type="Gramene" id="PNW82118">
    <property type="protein sequence ID" value="PNW82118"/>
    <property type="gene ID" value="CHLRE_06g274750v5"/>
</dbReference>
<dbReference type="Gramene" id="PNW82140">
    <property type="protein sequence ID" value="PNW82140"/>
    <property type="gene ID" value="CHLRE_06g275800v5"/>
</dbReference>
<dbReference type="KEGG" id="cre:CHLRE_06g265400v5"/>
<dbReference type="KEGG" id="cre:CHLRE_06g266750v5"/>
<dbReference type="KEGG" id="cre:CHLRE_06g268100v5"/>
<dbReference type="KEGG" id="cre:CHLRE_06g273850v5"/>
<dbReference type="KEGG" id="cre:CHLRE_06g274250v5"/>
<dbReference type="KEGG" id="cre:CHLRE_06g274750v5"/>
<dbReference type="KEGG" id="cre:CHLRE_06g275800v5"/>
<dbReference type="eggNOG" id="KOG1744">
    <property type="taxonomic scope" value="Eukaryota"/>
</dbReference>
<dbReference type="HOGENOM" id="CLU_075666_2_0_1"/>
<dbReference type="OrthoDB" id="2018474at2759"/>
<dbReference type="GO" id="GO:0000786">
    <property type="term" value="C:nucleosome"/>
    <property type="evidence" value="ECO:0007669"/>
    <property type="project" value="UniProtKB-KW"/>
</dbReference>
<dbReference type="GO" id="GO:0005634">
    <property type="term" value="C:nucleus"/>
    <property type="evidence" value="ECO:0007669"/>
    <property type="project" value="UniProtKB-SubCell"/>
</dbReference>
<dbReference type="GO" id="GO:0003677">
    <property type="term" value="F:DNA binding"/>
    <property type="evidence" value="ECO:0007669"/>
    <property type="project" value="UniProtKB-KW"/>
</dbReference>
<dbReference type="GO" id="GO:0046982">
    <property type="term" value="F:protein heterodimerization activity"/>
    <property type="evidence" value="ECO:0007669"/>
    <property type="project" value="InterPro"/>
</dbReference>
<dbReference type="GO" id="GO:0030527">
    <property type="term" value="F:structural constituent of chromatin"/>
    <property type="evidence" value="ECO:0007669"/>
    <property type="project" value="InterPro"/>
</dbReference>
<dbReference type="CDD" id="cd22910">
    <property type="entry name" value="HFD_H2B"/>
    <property type="match status" value="1"/>
</dbReference>
<dbReference type="FunFam" id="1.10.20.10:FF:000014">
    <property type="entry name" value="Histone H2B"/>
    <property type="match status" value="1"/>
</dbReference>
<dbReference type="Gene3D" id="1.10.20.10">
    <property type="entry name" value="Histone, subunit A"/>
    <property type="match status" value="1"/>
</dbReference>
<dbReference type="InterPro" id="IPR009072">
    <property type="entry name" value="Histone-fold"/>
</dbReference>
<dbReference type="InterPro" id="IPR007125">
    <property type="entry name" value="Histone_H2A/H2B/H3"/>
</dbReference>
<dbReference type="InterPro" id="IPR000558">
    <property type="entry name" value="Histone_H2B"/>
</dbReference>
<dbReference type="InterPro" id="IPR055333">
    <property type="entry name" value="HISTONE_H2B_site"/>
</dbReference>
<dbReference type="PANTHER" id="PTHR23428">
    <property type="entry name" value="HISTONE H2B"/>
    <property type="match status" value="1"/>
</dbReference>
<dbReference type="Pfam" id="PF00125">
    <property type="entry name" value="Histone"/>
    <property type="match status" value="1"/>
</dbReference>
<dbReference type="PRINTS" id="PR00621">
    <property type="entry name" value="HISTONEH2B"/>
</dbReference>
<dbReference type="SMART" id="SM00427">
    <property type="entry name" value="H2B"/>
    <property type="match status" value="1"/>
</dbReference>
<dbReference type="SUPFAM" id="SSF47113">
    <property type="entry name" value="Histone-fold"/>
    <property type="match status" value="1"/>
</dbReference>
<dbReference type="PROSITE" id="PS00357">
    <property type="entry name" value="HISTONE_H2B"/>
    <property type="match status" value="1"/>
</dbReference>
<evidence type="ECO:0000250" key="1"/>
<evidence type="ECO:0000256" key="2">
    <source>
        <dbReference type="SAM" id="MobiDB-lite"/>
    </source>
</evidence>
<evidence type="ECO:0000269" key="3">
    <source>
    </source>
</evidence>
<evidence type="ECO:0000269" key="4">
    <source>
    </source>
</evidence>
<evidence type="ECO:0000305" key="5"/>
<name>H2B4_CHLRE</name>
<comment type="function">
    <text>Core component of nucleosome. Nucleosomes wrap and compact DNA into chromatin, limiting DNA accessibility to the cellular machineries which require DNA as a template. Histones thereby play a central role in transcription regulation, DNA repair, DNA replication and chromosomal stability. DNA accessibility is regulated via a complex set of post-translational modifications of histones, also called histone code, and nucleosome remodeling.</text>
</comment>
<comment type="subunit">
    <text>The nucleosome is a histone octamer containing two molecules each of H2A, H2B, H3 and H4 assembled in one H3-H4 heterotetramer and two H2A-H2B heterodimers. The octamer wraps approximately 147 bp of DNA.</text>
</comment>
<comment type="subcellular location">
    <subcellularLocation>
        <location>Nucleus</location>
    </subcellularLocation>
    <subcellularLocation>
        <location>Chromosome</location>
    </subcellularLocation>
</comment>
<comment type="developmental stage">
    <text evidence="4">Up-regulated during the dark period.</text>
</comment>
<comment type="PTM">
    <text>The N-terminus is blocked.</text>
</comment>
<comment type="PTM">
    <text evidence="1 3 4">Can be acetylated to form H2BK33ac and H2BK34ac (By similarity). Acetylated mainly on the ubiquitinated form.</text>
</comment>
<comment type="PTM">
    <text>Monoubiquitinated to form H2BK143ub1; which is increased during the light period and may give a specific tag for epigenetic transcriptional activation.</text>
</comment>
<comment type="similarity">
    <text evidence="5">Belongs to the histone H2B family.</text>
</comment>
<comment type="caution">
    <text evidence="5">To ensure consistency between histone entries, we follow the 'Brno' nomenclature for histone modifications, with positions referring to those used in the literature for the 'closest' model organism. Due to slight variations in histone sequences between organisms and to the presence of initiator methionine in UniProtKB/Swiss-Prot sequences, the actual positions of modified amino acids in the sequence generally differ. In this entry the following conventions are used: H2BK33ac = acetylated Lys-41; H2BK34ac = acetylated Lys-42; H2BK143ub1 = monoubiquitinated Lys-149.</text>
</comment>
<sequence>MAPKKDEKPATAEAGAEAPAKAEAKPKAEKAAKKAKKEPSKKAAKEPKGDGEKKDKKKKKSAVETYKLYIYKVLKQVHPDTGISSKAMSIMNSFINDIFEKVATEASKLSRYNKKPTVTSREIQTAVRLVLPGELAKHAVSEGTKAVTKFTSG</sequence>
<accession>P54347</accession>
<organism>
    <name type="scientific">Chlamydomonas reinhardtii</name>
    <name type="common">Chlamydomonas smithii</name>
    <dbReference type="NCBI Taxonomy" id="3055"/>
    <lineage>
        <taxon>Eukaryota</taxon>
        <taxon>Viridiplantae</taxon>
        <taxon>Chlorophyta</taxon>
        <taxon>core chlorophytes</taxon>
        <taxon>Chlorophyceae</taxon>
        <taxon>CS clade</taxon>
        <taxon>Chlamydomonadales</taxon>
        <taxon>Chlamydomonadaceae</taxon>
        <taxon>Chlamydomonas</taxon>
    </lineage>
</organism>
<protein>
    <recommendedName>
        <fullName>Histone H2B.4</fullName>
    </recommendedName>
    <alternativeName>
        <fullName>H2B-IV</fullName>
    </alternativeName>
</protein>
<keyword id="KW-0007">Acetylation</keyword>
<keyword id="KW-0158">Chromosome</keyword>
<keyword id="KW-0903">Direct protein sequencing</keyword>
<keyword id="KW-0238">DNA-binding</keyword>
<keyword id="KW-1017">Isopeptide bond</keyword>
<keyword id="KW-0544">Nucleosome core</keyword>
<keyword id="KW-0539">Nucleus</keyword>
<keyword id="KW-0832">Ubl conjugation</keyword>
<proteinExistence type="evidence at protein level"/>
<reference key="1">
    <citation type="journal article" date="1995" name="Curr. Genet.">
        <title>The organization structure and regulatory elements of Chlamydomonas histone genes reveal features linking plant and animal genes.</title>
        <authorList>
            <person name="Fabry S."/>
            <person name="Mueller K."/>
            <person name="Lindauer A."/>
            <person name="Park P.B."/>
            <person name="Cornelius T."/>
            <person name="Schmitt R."/>
        </authorList>
    </citation>
    <scope>NUCLEOTIDE SEQUENCE [GENOMIC DNA]</scope>
</reference>
<reference key="2">
    <citation type="journal article" date="1992" name="Arch. Biochem. Biophys.">
        <title>Purification of Chlamydomonas 28-kDa ubiquitinated protein and its identification as ubiquitinated histone H2B.</title>
        <authorList>
            <person name="Shimogawara K."/>
            <person name="Muto S."/>
        </authorList>
    </citation>
    <scope>PROTEIN SEQUENCE OF 61-101 AND 106-152</scope>
    <scope>UBIQUITINATION AT LYS-149</scope>
    <source>
        <strain>cw15</strain>
    </source>
</reference>
<reference key="3">
    <citation type="journal article" date="1995" name="Plant Physiol.">
        <title>Histones of Chlamydomonas reinhardtii. Synthesis, acetylation, and methylation.</title>
        <authorList>
            <person name="Waterborg J.H."/>
            <person name="Robertson A.J."/>
            <person name="Tatar D.L."/>
            <person name="Borza C.M."/>
            <person name="Davie J.R."/>
        </authorList>
    </citation>
    <scope>UBIQUITINATION</scope>
    <scope>ACETYLATION</scope>
    <scope>DEVELOPMENTAL STAGE</scope>
    <source>
        <strain>cw15</strain>
    </source>
</reference>
<feature type="initiator methionine" description="Removed" evidence="5">
    <location>
        <position position="1"/>
    </location>
</feature>
<feature type="chain" id="PRO_0000071913" description="Histone H2B.4">
    <location>
        <begin position="2"/>
        <end position="153"/>
    </location>
</feature>
<feature type="region of interest" description="Disordered" evidence="2">
    <location>
        <begin position="1"/>
        <end position="60"/>
    </location>
</feature>
<feature type="compositionally biased region" description="Basic and acidic residues" evidence="2">
    <location>
        <begin position="1"/>
        <end position="10"/>
    </location>
</feature>
<feature type="compositionally biased region" description="Basic and acidic residues" evidence="2">
    <location>
        <begin position="20"/>
        <end position="54"/>
    </location>
</feature>
<feature type="modified residue" description="N6-acetyllysine" evidence="1">
    <location>
        <position position="41"/>
    </location>
</feature>
<feature type="modified residue" description="N6-acetyllysine" evidence="1">
    <location>
        <position position="42"/>
    </location>
</feature>
<feature type="cross-link" description="Glycyl lysine isopeptide (Lys-Gly) (interchain with G-Cter in ubiquitin)" evidence="1">
    <location>
        <position position="149"/>
    </location>
</feature>